<dbReference type="GO" id="GO:0005576">
    <property type="term" value="C:extracellular region"/>
    <property type="evidence" value="ECO:0000314"/>
    <property type="project" value="UniProtKB"/>
</dbReference>
<dbReference type="GO" id="GO:0006952">
    <property type="term" value="P:defense response"/>
    <property type="evidence" value="ECO:0007669"/>
    <property type="project" value="UniProtKB-KW"/>
</dbReference>
<dbReference type="GO" id="GO:0051001">
    <property type="term" value="P:negative regulation of nitric-oxide synthase activity"/>
    <property type="evidence" value="ECO:0000314"/>
    <property type="project" value="UniProtKB"/>
</dbReference>
<sequence length="13" mass="1454">GIAEFLNYIKSKA</sequence>
<feature type="peptide" id="PRO_0000371743" description="Signiferin-3.1">
    <location>
        <begin position="1"/>
        <end position="13"/>
    </location>
</feature>
<feature type="modified residue" description="Alanine amide" evidence="1">
    <location>
        <position position="13"/>
    </location>
</feature>
<feature type="unsure residue" description="GI or IG" evidence="1">
    <location>
        <begin position="1"/>
        <end position="2"/>
    </location>
</feature>
<evidence type="ECO:0000269" key="1">
    <source>
    </source>
</evidence>
<evidence type="ECO:0000269" key="2">
    <source>
    </source>
</evidence>
<evidence type="ECO:0000269" key="3">
    <source>
    </source>
</evidence>
<evidence type="ECO:0000305" key="4"/>
<organism>
    <name type="scientific">Crinia signifera</name>
    <name type="common">Common eastern froglet</name>
    <dbReference type="NCBI Taxonomy" id="326986"/>
    <lineage>
        <taxon>Eukaryota</taxon>
        <taxon>Metazoa</taxon>
        <taxon>Chordata</taxon>
        <taxon>Craniata</taxon>
        <taxon>Vertebrata</taxon>
        <taxon>Euteleostomi</taxon>
        <taxon>Amphibia</taxon>
        <taxon>Batrachia</taxon>
        <taxon>Anura</taxon>
        <taxon>Neobatrachia</taxon>
        <taxon>Myobatrachoidea</taxon>
        <taxon>Myobatrachidae</taxon>
        <taxon>Myobatrachinae</taxon>
        <taxon>Crinia</taxon>
    </lineage>
</organism>
<keyword id="KW-0027">Amidation</keyword>
<keyword id="KW-0878">Amphibian defense peptide</keyword>
<keyword id="KW-0903">Direct protein sequencing</keyword>
<keyword id="KW-0964">Secreted</keyword>
<accession>P86135</accession>
<protein>
    <recommendedName>
        <fullName>Signiferin-3.1</fullName>
    </recommendedName>
</protein>
<reference evidence="4" key="1">
    <citation type="journal article" date="2004" name="Rapid Commun. Mass Spectrom.">
        <title>Host-defence skin peptides of the Australian common froglet Crinia signifera: sequence determination using positive and negative ion electrospray mass spectra.</title>
        <authorList>
            <person name="Maselli V.M."/>
            <person name="Brinkworth C.S."/>
            <person name="Bowie J.H."/>
            <person name="Tyler M.J."/>
        </authorList>
    </citation>
    <scope>PROTEIN SEQUENCE</scope>
    <scope>SUBCELLULAR LOCATION</scope>
    <scope>TISSUE SPECIFICITY</scope>
    <scope>AMIDATION AT ALA-13</scope>
    <source>
        <tissue evidence="1">Skin secretion</tissue>
    </source>
</reference>
<reference evidence="4" key="2">
    <citation type="journal article" date="2006" name="Rapid Commun. Mass Spectrom.">
        <title>Host-defence skin peptides of the Australian streambank froglet Crinia riparia: isolation and sequence determination by positive and negative ion electrospray mass spectrometry.</title>
        <authorList>
            <person name="Maselli V.M."/>
            <person name="Bilusich D."/>
            <person name="Bowie J.H."/>
            <person name="Tyler M.J."/>
        </authorList>
    </citation>
    <scope>FUNCTION</scope>
</reference>
<reference evidence="4" key="3">
    <citation type="journal article" date="2008" name="Regul. Pept.">
        <title>Disulfide-containing peptides from the glandular skin secretions of froglets of the genus Crinia: structure, activity and evolutionary trends.</title>
        <authorList>
            <person name="Jackway R.J."/>
            <person name="Pukala T.L."/>
            <person name="Maselli V.M."/>
            <person name="Musgrave I.F."/>
            <person name="Bowie J.H."/>
            <person name="Liu Y."/>
            <person name="Surinya-Johnson K.H."/>
            <person name="Donnellan S.C."/>
            <person name="Doyle J.R."/>
            <person name="Llewellyn L.E."/>
            <person name="Tyler M.J."/>
        </authorList>
    </citation>
    <scope>FUNCTION</scope>
    <scope>DISCUSSION OF SEQUENCE</scope>
</reference>
<name>SIG31_CRISI</name>
<proteinExistence type="evidence at protein level"/>
<comment type="function">
    <text evidence="2 3">Inhibits the formation of NO by neuronal nitric oxide synthase with an IC(50) of 81 ug/ml.</text>
</comment>
<comment type="subcellular location">
    <subcellularLocation>
        <location evidence="1">Secreted</location>
    </subcellularLocation>
</comment>
<comment type="tissue specificity">
    <text evidence="1">Expressed by the skin glands.</text>
</comment>